<evidence type="ECO:0000255" key="1">
    <source>
        <dbReference type="HAMAP-Rule" id="MF_00711"/>
    </source>
</evidence>
<dbReference type="EC" id="1.4.4.2" evidence="1"/>
<dbReference type="EMBL" id="CP000082">
    <property type="protein sequence ID" value="AAZ18649.1"/>
    <property type="molecule type" value="Genomic_DNA"/>
</dbReference>
<dbReference type="RefSeq" id="WP_011280076.1">
    <property type="nucleotide sequence ID" value="NC_007204.1"/>
</dbReference>
<dbReference type="SMR" id="Q4FTK9"/>
<dbReference type="STRING" id="259536.Psyc_0796"/>
<dbReference type="KEGG" id="par:Psyc_0796"/>
<dbReference type="eggNOG" id="COG0403">
    <property type="taxonomic scope" value="Bacteria"/>
</dbReference>
<dbReference type="eggNOG" id="COG1003">
    <property type="taxonomic scope" value="Bacteria"/>
</dbReference>
<dbReference type="HOGENOM" id="CLU_004620_1_1_6"/>
<dbReference type="OrthoDB" id="9801272at2"/>
<dbReference type="Proteomes" id="UP000000546">
    <property type="component" value="Chromosome"/>
</dbReference>
<dbReference type="GO" id="GO:0005829">
    <property type="term" value="C:cytosol"/>
    <property type="evidence" value="ECO:0007669"/>
    <property type="project" value="TreeGrafter"/>
</dbReference>
<dbReference type="GO" id="GO:0005960">
    <property type="term" value="C:glycine cleavage complex"/>
    <property type="evidence" value="ECO:0007669"/>
    <property type="project" value="TreeGrafter"/>
</dbReference>
<dbReference type="GO" id="GO:0016594">
    <property type="term" value="F:glycine binding"/>
    <property type="evidence" value="ECO:0007669"/>
    <property type="project" value="TreeGrafter"/>
</dbReference>
<dbReference type="GO" id="GO:0004375">
    <property type="term" value="F:glycine dehydrogenase (decarboxylating) activity"/>
    <property type="evidence" value="ECO:0007669"/>
    <property type="project" value="UniProtKB-EC"/>
</dbReference>
<dbReference type="GO" id="GO:0030170">
    <property type="term" value="F:pyridoxal phosphate binding"/>
    <property type="evidence" value="ECO:0007669"/>
    <property type="project" value="TreeGrafter"/>
</dbReference>
<dbReference type="GO" id="GO:0019464">
    <property type="term" value="P:glycine decarboxylation via glycine cleavage system"/>
    <property type="evidence" value="ECO:0007669"/>
    <property type="project" value="UniProtKB-UniRule"/>
</dbReference>
<dbReference type="FunFam" id="3.40.640.10:FF:000005">
    <property type="entry name" value="Glycine dehydrogenase (decarboxylating), mitochondrial"/>
    <property type="match status" value="1"/>
</dbReference>
<dbReference type="FunFam" id="3.40.640.10:FF:000007">
    <property type="entry name" value="glycine dehydrogenase (Decarboxylating), mitochondrial"/>
    <property type="match status" value="1"/>
</dbReference>
<dbReference type="Gene3D" id="3.90.1150.10">
    <property type="entry name" value="Aspartate Aminotransferase, domain 1"/>
    <property type="match status" value="2"/>
</dbReference>
<dbReference type="Gene3D" id="3.40.640.10">
    <property type="entry name" value="Type I PLP-dependent aspartate aminotransferase-like (Major domain)"/>
    <property type="match status" value="2"/>
</dbReference>
<dbReference type="HAMAP" id="MF_00711">
    <property type="entry name" value="GcvP"/>
    <property type="match status" value="1"/>
</dbReference>
<dbReference type="InterPro" id="IPR000192">
    <property type="entry name" value="Aminotrans_V_dom"/>
</dbReference>
<dbReference type="InterPro" id="IPR003437">
    <property type="entry name" value="GcvP"/>
</dbReference>
<dbReference type="InterPro" id="IPR049316">
    <property type="entry name" value="GDC-P_C"/>
</dbReference>
<dbReference type="InterPro" id="IPR049315">
    <property type="entry name" value="GDC-P_N"/>
</dbReference>
<dbReference type="InterPro" id="IPR020581">
    <property type="entry name" value="GDC_P"/>
</dbReference>
<dbReference type="InterPro" id="IPR015424">
    <property type="entry name" value="PyrdxlP-dep_Trfase"/>
</dbReference>
<dbReference type="InterPro" id="IPR015421">
    <property type="entry name" value="PyrdxlP-dep_Trfase_major"/>
</dbReference>
<dbReference type="InterPro" id="IPR015422">
    <property type="entry name" value="PyrdxlP-dep_Trfase_small"/>
</dbReference>
<dbReference type="NCBIfam" id="TIGR00461">
    <property type="entry name" value="gcvP"/>
    <property type="match status" value="1"/>
</dbReference>
<dbReference type="NCBIfam" id="NF003346">
    <property type="entry name" value="PRK04366.1"/>
    <property type="match status" value="1"/>
</dbReference>
<dbReference type="PANTHER" id="PTHR11773:SF13">
    <property type="entry name" value="GLYCINE DEHYDROGENASE (DECARBOXYLATING)"/>
    <property type="match status" value="1"/>
</dbReference>
<dbReference type="PANTHER" id="PTHR11773">
    <property type="entry name" value="GLYCINE DEHYDROGENASE, DECARBOXYLATING"/>
    <property type="match status" value="1"/>
</dbReference>
<dbReference type="Pfam" id="PF00266">
    <property type="entry name" value="Aminotran_5"/>
    <property type="match status" value="1"/>
</dbReference>
<dbReference type="Pfam" id="PF21478">
    <property type="entry name" value="GcvP2_C"/>
    <property type="match status" value="1"/>
</dbReference>
<dbReference type="Pfam" id="PF02347">
    <property type="entry name" value="GDC-P"/>
    <property type="match status" value="1"/>
</dbReference>
<dbReference type="SUPFAM" id="SSF53383">
    <property type="entry name" value="PLP-dependent transferases"/>
    <property type="match status" value="2"/>
</dbReference>
<accession>Q4FTK9</accession>
<comment type="function">
    <text evidence="1">The glycine cleavage system catalyzes the degradation of glycine. The P protein binds the alpha-amino group of glycine through its pyridoxal phosphate cofactor; CO(2) is released and the remaining methylamine moiety is then transferred to the lipoamide cofactor of the H protein.</text>
</comment>
<comment type="catalytic activity">
    <reaction evidence="1">
        <text>N(6)-[(R)-lipoyl]-L-lysyl-[glycine-cleavage complex H protein] + glycine + H(+) = N(6)-[(R)-S(8)-aminomethyldihydrolipoyl]-L-lysyl-[glycine-cleavage complex H protein] + CO2</text>
        <dbReference type="Rhea" id="RHEA:24304"/>
        <dbReference type="Rhea" id="RHEA-COMP:10494"/>
        <dbReference type="Rhea" id="RHEA-COMP:10495"/>
        <dbReference type="ChEBI" id="CHEBI:15378"/>
        <dbReference type="ChEBI" id="CHEBI:16526"/>
        <dbReference type="ChEBI" id="CHEBI:57305"/>
        <dbReference type="ChEBI" id="CHEBI:83099"/>
        <dbReference type="ChEBI" id="CHEBI:83143"/>
        <dbReference type="EC" id="1.4.4.2"/>
    </reaction>
</comment>
<comment type="cofactor">
    <cofactor evidence="1">
        <name>pyridoxal 5'-phosphate</name>
        <dbReference type="ChEBI" id="CHEBI:597326"/>
    </cofactor>
</comment>
<comment type="subunit">
    <text evidence="1">The glycine cleavage system is composed of four proteins: P, T, L and H.</text>
</comment>
<comment type="similarity">
    <text evidence="1">Belongs to the GcvP family.</text>
</comment>
<organism>
    <name type="scientific">Psychrobacter arcticus (strain DSM 17307 / VKM B-2377 / 273-4)</name>
    <dbReference type="NCBI Taxonomy" id="259536"/>
    <lineage>
        <taxon>Bacteria</taxon>
        <taxon>Pseudomonadati</taxon>
        <taxon>Pseudomonadota</taxon>
        <taxon>Gammaproteobacteria</taxon>
        <taxon>Moraxellales</taxon>
        <taxon>Moraxellaceae</taxon>
        <taxon>Psychrobacter</taxon>
    </lineage>
</organism>
<protein>
    <recommendedName>
        <fullName evidence="1">Glycine dehydrogenase (decarboxylating)</fullName>
        <ecNumber evidence="1">1.4.4.2</ecNumber>
    </recommendedName>
    <alternativeName>
        <fullName evidence="1">Glycine cleavage system P-protein</fullName>
    </alternativeName>
    <alternativeName>
        <fullName evidence="1">Glycine decarboxylase</fullName>
    </alternativeName>
    <alternativeName>
        <fullName evidence="1">Glycine dehydrogenase (aminomethyl-transferring)</fullName>
    </alternativeName>
</protein>
<keyword id="KW-0560">Oxidoreductase</keyword>
<keyword id="KW-0663">Pyridoxal phosphate</keyword>
<keyword id="KW-1185">Reference proteome</keyword>
<gene>
    <name evidence="1" type="primary">gcvP</name>
    <name type="ordered locus">Psyc_0796</name>
</gene>
<reference key="1">
    <citation type="journal article" date="2010" name="Appl. Environ. Microbiol.">
        <title>The genome sequence of Psychrobacter arcticus 273-4, a psychroactive Siberian permafrost bacterium, reveals mechanisms for adaptation to low-temperature growth.</title>
        <authorList>
            <person name="Ayala-del-Rio H.L."/>
            <person name="Chain P.S."/>
            <person name="Grzymski J.J."/>
            <person name="Ponder M.A."/>
            <person name="Ivanova N."/>
            <person name="Bergholz P.W."/>
            <person name="Di Bartolo G."/>
            <person name="Hauser L."/>
            <person name="Land M."/>
            <person name="Bakermans C."/>
            <person name="Rodrigues D."/>
            <person name="Klappenbach J."/>
            <person name="Zarka D."/>
            <person name="Larimer F."/>
            <person name="Richardson P."/>
            <person name="Murray A."/>
            <person name="Thomashow M."/>
            <person name="Tiedje J.M."/>
        </authorList>
    </citation>
    <scope>NUCLEOTIDE SEQUENCE [LARGE SCALE GENOMIC DNA]</scope>
    <source>
        <strain>DSM 17307 / VKM B-2377 / 273-4</strain>
    </source>
</reference>
<proteinExistence type="inferred from homology"/>
<feature type="chain" id="PRO_0000227122" description="Glycine dehydrogenase (decarboxylating)">
    <location>
        <begin position="1"/>
        <end position="965"/>
    </location>
</feature>
<feature type="modified residue" description="N6-(pyridoxal phosphate)lysine" evidence="1">
    <location>
        <position position="711"/>
    </location>
</feature>
<name>GCSP_PSYA2</name>
<sequence length="965" mass="105914">MTISQNPTLDTFKGLFNEAEFVYRHLGSNDAKQADLLSAIGYKDMATFINDTVPEPVRLHKELDLPVAMSEHAALAKLRTMADDITVNKSYIGQGYSPVRMPAVIQRNVLENPGWYTAYTPYQAEIAQGRLEALLNFQQVCIDLTGLELAGASLLDEATAAAEAMAMSKRVSKSKSMQFFVDDRVYSQTLDVINTRAKYFGWEVVVGDFELAKSGDYFGALFQYVGVEGDVKDLTDVIAAVKKNKTYVNVVSDIMSLVLLKSPADMGADVALGSTQRFGIPMGFGGPHAAYFAFSDKAKRSAPGRIIGVSKDSQGNTALRMALQTREQHIRREKANSNICTSQVLLANLAGMYAVYHGPGGVKRIATRIHAFATAFADVIKNANDSNLNVVHDQFFDSVVIDCGSEKLATQIFENADNVGYNLWRLGDSKLSVAFSETSDQEDFKILTQLFVTKAHDLPEDARISLDSTHLRTDDILTHPVFNSHHTEHEMLRYLKSLEDKDLAMNRSMISLGSCTMKLNATSEMLPITWPEFANVHPFAPRDQVTGYVAMIDSLQEQLKAITGFDDVSMQPNSGASGEYAGLLAIRRYHESLGETDRDVCLIPMSAHGTNPATAMMMGMKVVVVKTDDNGNVDIDDLTAKSEEHSARLGALMITYPSTHGVFEEGIRKICDLIHKHGGQVYMDGANMNAQVGMMQPADVGADVLHMNLHKTFCIPHGGGGPGMGPIGMKSHLAPFMANHTLSPVHNAQKDCSAVSAAPYGSASILPISWMYIAMMGRDGLLKATELALLNANYVAAELKDYYPVLYTGKNGRVAHECIIDIRPLKEETGISESDIAKRLMDYGFHSPTMSFPVAGTLMIEPTESESKEELDRFISALKSIKAEAMKAKAGEDNWTLENNPLVNAPHTAAMVIDGEWTYPYSRETAAFPLPYIRTNKFWPSVARVDDAYGDKNLMCSCPSIENYM</sequence>